<organism>
    <name type="scientific">Homo sapiens</name>
    <name type="common">Human</name>
    <dbReference type="NCBI Taxonomy" id="9606"/>
    <lineage>
        <taxon>Eukaryota</taxon>
        <taxon>Metazoa</taxon>
        <taxon>Chordata</taxon>
        <taxon>Craniata</taxon>
        <taxon>Vertebrata</taxon>
        <taxon>Euteleostomi</taxon>
        <taxon>Mammalia</taxon>
        <taxon>Eutheria</taxon>
        <taxon>Euarchontoglires</taxon>
        <taxon>Primates</taxon>
        <taxon>Haplorrhini</taxon>
        <taxon>Catarrhini</taxon>
        <taxon>Hominidae</taxon>
        <taxon>Homo</taxon>
    </lineage>
</organism>
<name>I20RA_HUMAN</name>
<sequence>MRAPGRPALRPLPLPPLLLLLLAAPWGRAVPCVSGGLPKPANITFLSINMKNVLQWTPPEGLQGVKVTYTVQYFIYGQKKWLNKSECRNINRTYCDLSAETSDYEHQYYAKVKAIWGTKCSKWAESGRFYPFLETQIGPPEVALTTDEKSISVVLTAPEKWKRNPEDLPVSMQQIYSNLKYNVSVLNTKSNRTWSQCVTNHTLVLTWLEPNTLYCVHVESFVPGPPRRAQPSEKQCARTLKDQSSEFKAKIIFWYVLPVSITVFLFSVMGYSIYRYIHVGKEKHPANLILIYGNEFDKRFFVPAEKIVINFITLNISDDSKISHQDMSLLGKSSDVSSLNDPQPSGNLRPPQEEEEVKHLGYASHLMEIFCDSEENTEGTSLTQQESLSRTIPPDKTVIEYEYDVRTTDICAGPEEQELSLQEEVSTQGTLLESQAALAVLGPQTLQYSYTPQLQDLDPLAQEHTDSEEGPEEEPSTTLVDWDPQTGRLCIPSLSSFDQDSEGCEPSEGDGLGEEGLLSRLYEEPAPDRPPGENETYLMQFMEEWGLYVQMEN</sequence>
<proteinExistence type="evidence at protein level"/>
<evidence type="ECO:0000250" key="1"/>
<evidence type="ECO:0000255" key="2"/>
<evidence type="ECO:0000255" key="3">
    <source>
        <dbReference type="PROSITE-ProRule" id="PRU00316"/>
    </source>
</evidence>
<evidence type="ECO:0000256" key="4">
    <source>
        <dbReference type="SAM" id="MobiDB-lite"/>
    </source>
</evidence>
<evidence type="ECO:0000269" key="5">
    <source>
    </source>
</evidence>
<evidence type="ECO:0000269" key="6">
    <source>
    </source>
</evidence>
<evidence type="ECO:0000269" key="7">
    <source>
    </source>
</evidence>
<evidence type="ECO:0000269" key="8">
    <source>
    </source>
</evidence>
<evidence type="ECO:0000269" key="9">
    <source>
    </source>
</evidence>
<evidence type="ECO:0000269" key="10">
    <source>
    </source>
</evidence>
<evidence type="ECO:0000269" key="11">
    <source>
    </source>
</evidence>
<evidence type="ECO:0000269" key="12">
    <source>
    </source>
</evidence>
<evidence type="ECO:0000269" key="13">
    <source>
    </source>
</evidence>
<evidence type="ECO:0000269" key="14">
    <source ref="1"/>
</evidence>
<evidence type="ECO:0000269" key="15">
    <source ref="5"/>
</evidence>
<evidence type="ECO:0000303" key="16">
    <source>
    </source>
</evidence>
<evidence type="ECO:0000303" key="17">
    <source>
    </source>
</evidence>
<evidence type="ECO:0000305" key="18"/>
<evidence type="ECO:0007829" key="19">
    <source>
        <dbReference type="PDB" id="4DOH"/>
    </source>
</evidence>
<protein>
    <recommendedName>
        <fullName>Interleukin-20 receptor subunit alpha</fullName>
        <shortName>IL-20 receptor subunit alpha</shortName>
        <shortName>IL-20R-alpha</shortName>
        <shortName>IL-20RA</shortName>
    </recommendedName>
    <alternativeName>
        <fullName>Cytokine receptor class-II member 8</fullName>
    </alternativeName>
    <alternativeName>
        <fullName>Cytokine receptor family 2 member 8</fullName>
        <shortName>CRF2-8</shortName>
    </alternativeName>
    <alternativeName>
        <fullName>IL-20R1</fullName>
    </alternativeName>
    <alternativeName>
        <fullName>ZcytoR7</fullName>
    </alternativeName>
</protein>
<reference key="1">
    <citation type="submission" date="1999-09" db="EMBL/GenBank/DDBJ databases">
        <title>Homo sapiens cytokine receptor homolog.</title>
        <authorList>
            <person name="Lok S."/>
            <person name="Kho C.-J."/>
            <person name="Jelmberg A."/>
            <person name="Adams R."/>
            <person name="Whitmore T."/>
            <person name="Farrah T."/>
            <person name="O'Hara P."/>
        </authorList>
    </citation>
    <scope>NUCLEOTIDE SEQUENCE [MRNA] (ISOFORM 1)</scope>
    <scope>VARIANTS ILE-259 AND PHE-382</scope>
</reference>
<reference key="2">
    <citation type="journal article" date="2003" name="Genome Res.">
        <title>The secreted protein discovery initiative (SPDI), a large-scale effort to identify novel human secreted and transmembrane proteins: a bioinformatics assessment.</title>
        <authorList>
            <person name="Clark H.F."/>
            <person name="Gurney A.L."/>
            <person name="Abaya E."/>
            <person name="Baker K."/>
            <person name="Baldwin D.T."/>
            <person name="Brush J."/>
            <person name="Chen J."/>
            <person name="Chow B."/>
            <person name="Chui C."/>
            <person name="Crowley C."/>
            <person name="Currell B."/>
            <person name="Deuel B."/>
            <person name="Dowd P."/>
            <person name="Eaton D."/>
            <person name="Foster J.S."/>
            <person name="Grimaldi C."/>
            <person name="Gu Q."/>
            <person name="Hass P.E."/>
            <person name="Heldens S."/>
            <person name="Huang A."/>
            <person name="Kim H.S."/>
            <person name="Klimowski L."/>
            <person name="Jin Y."/>
            <person name="Johnson S."/>
            <person name="Lee J."/>
            <person name="Lewis L."/>
            <person name="Liao D."/>
            <person name="Mark M.R."/>
            <person name="Robbie E."/>
            <person name="Sanchez C."/>
            <person name="Schoenfeld J."/>
            <person name="Seshagiri S."/>
            <person name="Simmons L."/>
            <person name="Singh J."/>
            <person name="Smith V."/>
            <person name="Stinson J."/>
            <person name="Vagts A."/>
            <person name="Vandlen R.L."/>
            <person name="Watanabe C."/>
            <person name="Wieand D."/>
            <person name="Woods K."/>
            <person name="Xie M.-H."/>
            <person name="Yansura D.G."/>
            <person name="Yi S."/>
            <person name="Yu G."/>
            <person name="Yuan J."/>
            <person name="Zhang M."/>
            <person name="Zhang Z."/>
            <person name="Goddard A.D."/>
            <person name="Wood W.I."/>
            <person name="Godowski P.J."/>
            <person name="Gray A.M."/>
        </authorList>
    </citation>
    <scope>NUCLEOTIDE SEQUENCE [LARGE SCALE MRNA] (ISOFORM 2)</scope>
    <scope>VARIANT ILE-259</scope>
</reference>
<reference key="3">
    <citation type="journal article" date="2004" name="Nat. Genet.">
        <title>Complete sequencing and characterization of 21,243 full-length human cDNAs.</title>
        <authorList>
            <person name="Ota T."/>
            <person name="Suzuki Y."/>
            <person name="Nishikawa T."/>
            <person name="Otsuki T."/>
            <person name="Sugiyama T."/>
            <person name="Irie R."/>
            <person name="Wakamatsu A."/>
            <person name="Hayashi K."/>
            <person name="Sato H."/>
            <person name="Nagai K."/>
            <person name="Kimura K."/>
            <person name="Makita H."/>
            <person name="Sekine M."/>
            <person name="Obayashi M."/>
            <person name="Nishi T."/>
            <person name="Shibahara T."/>
            <person name="Tanaka T."/>
            <person name="Ishii S."/>
            <person name="Yamamoto J."/>
            <person name="Saito K."/>
            <person name="Kawai Y."/>
            <person name="Isono Y."/>
            <person name="Nakamura Y."/>
            <person name="Nagahari K."/>
            <person name="Murakami K."/>
            <person name="Yasuda T."/>
            <person name="Iwayanagi T."/>
            <person name="Wagatsuma M."/>
            <person name="Shiratori A."/>
            <person name="Sudo H."/>
            <person name="Hosoiri T."/>
            <person name="Kaku Y."/>
            <person name="Kodaira H."/>
            <person name="Kondo H."/>
            <person name="Sugawara M."/>
            <person name="Takahashi M."/>
            <person name="Kanda K."/>
            <person name="Yokoi T."/>
            <person name="Furuya T."/>
            <person name="Kikkawa E."/>
            <person name="Omura Y."/>
            <person name="Abe K."/>
            <person name="Kamihara K."/>
            <person name="Katsuta N."/>
            <person name="Sato K."/>
            <person name="Tanikawa M."/>
            <person name="Yamazaki M."/>
            <person name="Ninomiya K."/>
            <person name="Ishibashi T."/>
            <person name="Yamashita H."/>
            <person name="Murakawa K."/>
            <person name="Fujimori K."/>
            <person name="Tanai H."/>
            <person name="Kimata M."/>
            <person name="Watanabe M."/>
            <person name="Hiraoka S."/>
            <person name="Chiba Y."/>
            <person name="Ishida S."/>
            <person name="Ono Y."/>
            <person name="Takiguchi S."/>
            <person name="Watanabe S."/>
            <person name="Yosida M."/>
            <person name="Hotuta T."/>
            <person name="Kusano J."/>
            <person name="Kanehori K."/>
            <person name="Takahashi-Fujii A."/>
            <person name="Hara H."/>
            <person name="Tanase T.-O."/>
            <person name="Nomura Y."/>
            <person name="Togiya S."/>
            <person name="Komai F."/>
            <person name="Hara R."/>
            <person name="Takeuchi K."/>
            <person name="Arita M."/>
            <person name="Imose N."/>
            <person name="Musashino K."/>
            <person name="Yuuki H."/>
            <person name="Oshima A."/>
            <person name="Sasaki N."/>
            <person name="Aotsuka S."/>
            <person name="Yoshikawa Y."/>
            <person name="Matsunawa H."/>
            <person name="Ichihara T."/>
            <person name="Shiohata N."/>
            <person name="Sano S."/>
            <person name="Moriya S."/>
            <person name="Momiyama H."/>
            <person name="Satoh N."/>
            <person name="Takami S."/>
            <person name="Terashima Y."/>
            <person name="Suzuki O."/>
            <person name="Nakagawa S."/>
            <person name="Senoh A."/>
            <person name="Mizoguchi H."/>
            <person name="Goto Y."/>
            <person name="Shimizu F."/>
            <person name="Wakebe H."/>
            <person name="Hishigaki H."/>
            <person name="Watanabe T."/>
            <person name="Sugiyama A."/>
            <person name="Takemoto M."/>
            <person name="Kawakami B."/>
            <person name="Yamazaki M."/>
            <person name="Watanabe K."/>
            <person name="Kumagai A."/>
            <person name="Itakura S."/>
            <person name="Fukuzumi Y."/>
            <person name="Fujimori Y."/>
            <person name="Komiyama M."/>
            <person name="Tashiro H."/>
            <person name="Tanigami A."/>
            <person name="Fujiwara T."/>
            <person name="Ono T."/>
            <person name="Yamada K."/>
            <person name="Fujii Y."/>
            <person name="Ozaki K."/>
            <person name="Hirao M."/>
            <person name="Ohmori Y."/>
            <person name="Kawabata A."/>
            <person name="Hikiji T."/>
            <person name="Kobatake N."/>
            <person name="Inagaki H."/>
            <person name="Ikema Y."/>
            <person name="Okamoto S."/>
            <person name="Okitani R."/>
            <person name="Kawakami T."/>
            <person name="Noguchi S."/>
            <person name="Itoh T."/>
            <person name="Shigeta K."/>
            <person name="Senba T."/>
            <person name="Matsumura K."/>
            <person name="Nakajima Y."/>
            <person name="Mizuno T."/>
            <person name="Morinaga M."/>
            <person name="Sasaki M."/>
            <person name="Togashi T."/>
            <person name="Oyama M."/>
            <person name="Hata H."/>
            <person name="Watanabe M."/>
            <person name="Komatsu T."/>
            <person name="Mizushima-Sugano J."/>
            <person name="Satoh T."/>
            <person name="Shirai Y."/>
            <person name="Takahashi Y."/>
            <person name="Nakagawa K."/>
            <person name="Okumura K."/>
            <person name="Nagase T."/>
            <person name="Nomura N."/>
            <person name="Kikuchi H."/>
            <person name="Masuho Y."/>
            <person name="Yamashita R."/>
            <person name="Nakai K."/>
            <person name="Yada T."/>
            <person name="Nakamura Y."/>
            <person name="Ohara O."/>
            <person name="Isogai T."/>
            <person name="Sugano S."/>
        </authorList>
    </citation>
    <scope>NUCLEOTIDE SEQUENCE [LARGE SCALE MRNA] (ISOFORM 3)</scope>
    <scope>VARIANT ILE-259</scope>
    <source>
        <tissue>Fibroblast</tissue>
    </source>
</reference>
<reference key="4">
    <citation type="journal article" date="2003" name="Nature">
        <title>The DNA sequence and analysis of human chromosome 6.</title>
        <authorList>
            <person name="Mungall A.J."/>
            <person name="Palmer S.A."/>
            <person name="Sims S.K."/>
            <person name="Edwards C.A."/>
            <person name="Ashurst J.L."/>
            <person name="Wilming L."/>
            <person name="Jones M.C."/>
            <person name="Horton R."/>
            <person name="Hunt S.E."/>
            <person name="Scott C.E."/>
            <person name="Gilbert J.G.R."/>
            <person name="Clamp M.E."/>
            <person name="Bethel G."/>
            <person name="Milne S."/>
            <person name="Ainscough R."/>
            <person name="Almeida J.P."/>
            <person name="Ambrose K.D."/>
            <person name="Andrews T.D."/>
            <person name="Ashwell R.I.S."/>
            <person name="Babbage A.K."/>
            <person name="Bagguley C.L."/>
            <person name="Bailey J."/>
            <person name="Banerjee R."/>
            <person name="Barker D.J."/>
            <person name="Barlow K.F."/>
            <person name="Bates K."/>
            <person name="Beare D.M."/>
            <person name="Beasley H."/>
            <person name="Beasley O."/>
            <person name="Bird C.P."/>
            <person name="Blakey S.E."/>
            <person name="Bray-Allen S."/>
            <person name="Brook J."/>
            <person name="Brown A.J."/>
            <person name="Brown J.Y."/>
            <person name="Burford D.C."/>
            <person name="Burrill W."/>
            <person name="Burton J."/>
            <person name="Carder C."/>
            <person name="Carter N.P."/>
            <person name="Chapman J.C."/>
            <person name="Clark S.Y."/>
            <person name="Clark G."/>
            <person name="Clee C.M."/>
            <person name="Clegg S."/>
            <person name="Cobley V."/>
            <person name="Collier R.E."/>
            <person name="Collins J.E."/>
            <person name="Colman L.K."/>
            <person name="Corby N.R."/>
            <person name="Coville G.J."/>
            <person name="Culley K.M."/>
            <person name="Dhami P."/>
            <person name="Davies J."/>
            <person name="Dunn M."/>
            <person name="Earthrowl M.E."/>
            <person name="Ellington A.E."/>
            <person name="Evans K.A."/>
            <person name="Faulkner L."/>
            <person name="Francis M.D."/>
            <person name="Frankish A."/>
            <person name="Frankland J."/>
            <person name="French L."/>
            <person name="Garner P."/>
            <person name="Garnett J."/>
            <person name="Ghori M.J."/>
            <person name="Gilby L.M."/>
            <person name="Gillson C.J."/>
            <person name="Glithero R.J."/>
            <person name="Grafham D.V."/>
            <person name="Grant M."/>
            <person name="Gribble S."/>
            <person name="Griffiths C."/>
            <person name="Griffiths M.N.D."/>
            <person name="Hall R."/>
            <person name="Halls K.S."/>
            <person name="Hammond S."/>
            <person name="Harley J.L."/>
            <person name="Hart E.A."/>
            <person name="Heath P.D."/>
            <person name="Heathcott R."/>
            <person name="Holmes S.J."/>
            <person name="Howden P.J."/>
            <person name="Howe K.L."/>
            <person name="Howell G.R."/>
            <person name="Huckle E."/>
            <person name="Humphray S.J."/>
            <person name="Humphries M.D."/>
            <person name="Hunt A.R."/>
            <person name="Johnson C.M."/>
            <person name="Joy A.A."/>
            <person name="Kay M."/>
            <person name="Keenan S.J."/>
            <person name="Kimberley A.M."/>
            <person name="King A."/>
            <person name="Laird G.K."/>
            <person name="Langford C."/>
            <person name="Lawlor S."/>
            <person name="Leongamornlert D.A."/>
            <person name="Leversha M."/>
            <person name="Lloyd C.R."/>
            <person name="Lloyd D.M."/>
            <person name="Loveland J.E."/>
            <person name="Lovell J."/>
            <person name="Martin S."/>
            <person name="Mashreghi-Mohammadi M."/>
            <person name="Maslen G.L."/>
            <person name="Matthews L."/>
            <person name="McCann O.T."/>
            <person name="McLaren S.J."/>
            <person name="McLay K."/>
            <person name="McMurray A."/>
            <person name="Moore M.J.F."/>
            <person name="Mullikin J.C."/>
            <person name="Niblett D."/>
            <person name="Nickerson T."/>
            <person name="Novik K.L."/>
            <person name="Oliver K."/>
            <person name="Overton-Larty E.K."/>
            <person name="Parker A."/>
            <person name="Patel R."/>
            <person name="Pearce A.V."/>
            <person name="Peck A.I."/>
            <person name="Phillimore B.J.C.T."/>
            <person name="Phillips S."/>
            <person name="Plumb R.W."/>
            <person name="Porter K.M."/>
            <person name="Ramsey Y."/>
            <person name="Ranby S.A."/>
            <person name="Rice C.M."/>
            <person name="Ross M.T."/>
            <person name="Searle S.M."/>
            <person name="Sehra H.K."/>
            <person name="Sheridan E."/>
            <person name="Skuce C.D."/>
            <person name="Smith S."/>
            <person name="Smith M."/>
            <person name="Spraggon L."/>
            <person name="Squares S.L."/>
            <person name="Steward C.A."/>
            <person name="Sycamore N."/>
            <person name="Tamlyn-Hall G."/>
            <person name="Tester J."/>
            <person name="Theaker A.J."/>
            <person name="Thomas D.W."/>
            <person name="Thorpe A."/>
            <person name="Tracey A."/>
            <person name="Tromans A."/>
            <person name="Tubby B."/>
            <person name="Wall M."/>
            <person name="Wallis J.M."/>
            <person name="West A.P."/>
            <person name="White S.S."/>
            <person name="Whitehead S.L."/>
            <person name="Whittaker H."/>
            <person name="Wild A."/>
            <person name="Willey D.J."/>
            <person name="Wilmer T.E."/>
            <person name="Wood J.M."/>
            <person name="Wray P.W."/>
            <person name="Wyatt J.C."/>
            <person name="Young L."/>
            <person name="Younger R.M."/>
            <person name="Bentley D.R."/>
            <person name="Coulson A."/>
            <person name="Durbin R.M."/>
            <person name="Hubbard T."/>
            <person name="Sulston J.E."/>
            <person name="Dunham I."/>
            <person name="Rogers J."/>
            <person name="Beck S."/>
        </authorList>
    </citation>
    <scope>NUCLEOTIDE SEQUENCE [LARGE SCALE GENOMIC DNA]</scope>
</reference>
<reference key="5">
    <citation type="submission" date="2005-09" db="EMBL/GenBank/DDBJ databases">
        <authorList>
            <person name="Mural R.J."/>
            <person name="Istrail S."/>
            <person name="Sutton G.G."/>
            <person name="Florea L."/>
            <person name="Halpern A.L."/>
            <person name="Mobarry C.M."/>
            <person name="Lippert R."/>
            <person name="Walenz B."/>
            <person name="Shatkay H."/>
            <person name="Dew I."/>
            <person name="Miller J.R."/>
            <person name="Flanigan M.J."/>
            <person name="Edwards N.J."/>
            <person name="Bolanos R."/>
            <person name="Fasulo D."/>
            <person name="Halldorsson B.V."/>
            <person name="Hannenhalli S."/>
            <person name="Turner R."/>
            <person name="Yooseph S."/>
            <person name="Lu F."/>
            <person name="Nusskern D.R."/>
            <person name="Shue B.C."/>
            <person name="Zheng X.H."/>
            <person name="Zhong F."/>
            <person name="Delcher A.L."/>
            <person name="Huson D.H."/>
            <person name="Kravitz S.A."/>
            <person name="Mouchard L."/>
            <person name="Reinert K."/>
            <person name="Remington K.A."/>
            <person name="Clark A.G."/>
            <person name="Waterman M.S."/>
            <person name="Eichler E.E."/>
            <person name="Adams M.D."/>
            <person name="Hunkapiller M.W."/>
            <person name="Myers E.W."/>
            <person name="Venter J.C."/>
        </authorList>
    </citation>
    <scope>NUCLEOTIDE SEQUENCE [LARGE SCALE GENOMIC DNA]</scope>
    <scope>VARIANT ILE-259</scope>
</reference>
<reference key="6">
    <citation type="journal article" date="2004" name="Genome Res.">
        <title>The status, quality, and expansion of the NIH full-length cDNA project: the Mammalian Gene Collection (MGC).</title>
        <authorList>
            <consortium name="The MGC Project Team"/>
        </authorList>
    </citation>
    <scope>NUCLEOTIDE SEQUENCE [LARGE SCALE MRNA] (ISOFORM 1)</scope>
    <scope>VARIANT ILE-259</scope>
    <source>
        <tissue>Brain</tissue>
    </source>
</reference>
<reference key="7">
    <citation type="journal article" date="2004" name="Protein Sci.">
        <title>Signal peptide prediction based on analysis of experimentally verified cleavage sites.</title>
        <authorList>
            <person name="Zhang Z."/>
            <person name="Henzel W.J."/>
        </authorList>
    </citation>
    <scope>PROTEIN SEQUENCE OF 30-44</scope>
</reference>
<reference key="8">
    <citation type="journal article" date="2001" name="Cell">
        <title>Interleukin 20: discovery, receptor identification, and role in epidermal function.</title>
        <authorList>
            <person name="Blumberg H."/>
            <person name="Conklin D."/>
            <person name="Xu W.F."/>
            <person name="Grossmann A."/>
            <person name="Brender T."/>
            <person name="Carollo S."/>
            <person name="Eagan M."/>
            <person name="Foster D."/>
            <person name="Haldeman B.A."/>
            <person name="Hammond A."/>
            <person name="Haugen H."/>
            <person name="Jelinek L."/>
            <person name="Kelly J.D."/>
            <person name="Madden K."/>
            <person name="Maurer M.F."/>
            <person name="Parrish-Novak J."/>
            <person name="Prunkard D."/>
            <person name="Sexson S."/>
            <person name="Sprecher C."/>
            <person name="Waggie K."/>
            <person name="West J."/>
            <person name="Whitmore T.E."/>
            <person name="Yao L."/>
            <person name="Kuechle M.K."/>
            <person name="Dale B.A."/>
            <person name="Chandrasekher Y.A."/>
        </authorList>
    </citation>
    <scope>SUBUNIT</scope>
    <scope>LIGAND-BINDING</scope>
    <scope>TISSUE SPECIFICITY</scope>
</reference>
<reference key="9">
    <citation type="journal article" date="2001" name="J. Immunol.">
        <title>STAT activation by IL-19, IL-20 and mda-7 through IL-20 receptor complexes of two types.</title>
        <authorList>
            <person name="Dumoutier L."/>
            <person name="Leemans C."/>
            <person name="Lejeune D."/>
            <person name="Kotenko S.V."/>
            <person name="Renauld J.-C."/>
        </authorList>
    </citation>
    <scope>LIGAND-BINDING</scope>
</reference>
<reference key="10">
    <citation type="journal article" date="2002" name="J. Biol. Chem.">
        <title>Interleukins 19, 20, and 24 signal through two distinct receptor complexes. Differences in receptor-ligand interactions mediate unique biological functions.</title>
        <authorList>
            <person name="Parrish-Novak J."/>
            <person name="Xu W."/>
            <person name="Brender T."/>
            <person name="Yao L."/>
            <person name="Jones C."/>
            <person name="West J."/>
            <person name="Brandt C."/>
            <person name="Jelinek L."/>
            <person name="Madden K."/>
            <person name="McKernan P.A."/>
            <person name="Foster D.C."/>
            <person name="Jaspers S."/>
            <person name="Chandrasekher Y.A."/>
        </authorList>
    </citation>
    <scope>SUBUNIT</scope>
    <scope>LIGAND-BINDING</scope>
</reference>
<reference key="11">
    <citation type="journal article" date="2003" name="Biochemistry">
        <title>Characterization of the recombinant extracellular domains of human interleukin-20 receptors and their complexes with interleukin-19 and interleukin-20.</title>
        <authorList>
            <person name="Pletnev S."/>
            <person name="Magracheva E."/>
            <person name="Kozlov S."/>
            <person name="Tobin G."/>
            <person name="Kotenko S.V."/>
            <person name="Wlodawer A."/>
            <person name="Zdanov A."/>
        </authorList>
    </citation>
    <scope>SUBUNIT</scope>
    <scope>LIGAND-BINDING</scope>
</reference>
<reference key="12">
    <citation type="journal article" date="2004" name="J. Immunol.">
        <title>IL-26 signals through a novel receptor complex composed of IL-20 receptor 1 and IL-10 receptor 2.</title>
        <authorList>
            <person name="Sheikh F."/>
            <person name="Baurin V.V."/>
            <person name="Lewis-Antes A."/>
            <person name="Shah N.K."/>
            <person name="Smirnov S.V."/>
            <person name="Anantha S."/>
            <person name="Dickensheets H."/>
            <person name="Dumoutier L."/>
            <person name="Renauld J.-C."/>
            <person name="Zdanov A."/>
            <person name="Donnelly R.P."/>
            <person name="Kotenko S.V."/>
        </authorList>
    </citation>
    <scope>SUBUNIT</scope>
    <scope>LIGAND-BINDING</scope>
    <scope>TISSUE SPECIFICITY</scope>
</reference>
<reference key="13">
    <citation type="journal article" date="2012" name="Proc. Natl. Acad. Sci. U.S.A.">
        <title>Structural basis for receptor sharing and activation by interleukin-20 receptor-2 (IL-20R2) binding cytokines.</title>
        <authorList>
            <person name="Logsdon N.J."/>
            <person name="Deshpande A."/>
            <person name="Harris B.D."/>
            <person name="Rajashankar K.R."/>
            <person name="Walter M.R."/>
        </authorList>
    </citation>
    <scope>X-RAY CRYSTALLOGRAPHY (2.8 ANGSTROMS) OF 29-245 IN COMPLEX WITH IL20RB AND IL20</scope>
    <scope>SUBUNIT</scope>
    <scope>DISULFIDE BONDS</scope>
</reference>
<feature type="signal peptide" evidence="11">
    <location>
        <begin position="1"/>
        <end position="29"/>
    </location>
</feature>
<feature type="chain" id="PRO_0000011036" description="Interleukin-20 receptor subunit alpha">
    <location>
        <begin position="30"/>
        <end position="553"/>
    </location>
</feature>
<feature type="topological domain" description="Extracellular" evidence="2">
    <location>
        <begin position="30"/>
        <end position="250"/>
    </location>
</feature>
<feature type="transmembrane region" description="Helical" evidence="2">
    <location>
        <begin position="251"/>
        <end position="271"/>
    </location>
</feature>
<feature type="topological domain" description="Cytoplasmic" evidence="2">
    <location>
        <begin position="272"/>
        <end position="553"/>
    </location>
</feature>
<feature type="domain" description="Fibronectin type-III 1" evidence="3">
    <location>
        <begin position="37"/>
        <end position="135"/>
    </location>
</feature>
<feature type="domain" description="Fibronectin type-III 2" evidence="3">
    <location>
        <begin position="136"/>
        <end position="242"/>
    </location>
</feature>
<feature type="region of interest" description="Disordered" evidence="4">
    <location>
        <begin position="333"/>
        <end position="353"/>
    </location>
</feature>
<feature type="region of interest" description="Disordered" evidence="4">
    <location>
        <begin position="462"/>
        <end position="515"/>
    </location>
</feature>
<feature type="compositionally biased region" description="Polar residues" evidence="4">
    <location>
        <begin position="334"/>
        <end position="346"/>
    </location>
</feature>
<feature type="compositionally biased region" description="Acidic residues" evidence="4">
    <location>
        <begin position="499"/>
        <end position="513"/>
    </location>
</feature>
<feature type="glycosylation site" description="N-linked (GlcNAc...) asparagine" evidence="2">
    <location>
        <position position="42"/>
    </location>
</feature>
<feature type="glycosylation site" description="N-linked (GlcNAc...) asparagine" evidence="2">
    <location>
        <position position="83"/>
    </location>
</feature>
<feature type="glycosylation site" description="N-linked (GlcNAc...) asparagine" evidence="2">
    <location>
        <position position="91"/>
    </location>
</feature>
<feature type="glycosylation site" description="N-linked (GlcNAc...) asparagine" evidence="2">
    <location>
        <position position="182"/>
    </location>
</feature>
<feature type="glycosylation site" description="N-linked (GlcNAc...) asparagine" evidence="2">
    <location>
        <position position="191"/>
    </location>
</feature>
<feature type="glycosylation site" description="N-linked (GlcNAc...) asparagine" evidence="2">
    <location>
        <position position="200"/>
    </location>
</feature>
<feature type="disulfide bond" evidence="13">
    <location>
        <begin position="87"/>
        <end position="95"/>
    </location>
</feature>
<feature type="disulfide bond" evidence="13">
    <location>
        <begin position="215"/>
        <end position="236"/>
    </location>
</feature>
<feature type="splice variant" id="VSP_011497" description="In isoform 2." evidence="16">
    <location>
        <begin position="1"/>
        <end position="111"/>
    </location>
</feature>
<feature type="splice variant" id="VSP_054741" description="In isoform 3." evidence="17">
    <location>
        <begin position="1"/>
        <end position="49"/>
    </location>
</feature>
<feature type="splice variant" id="VSP_011498" description="In isoform 2." evidence="16">
    <original>VKAIWGTKCSKWAESGRFYPFLET</original>
    <variation>MSYNGLHQRVFKELKLLTLCSISS</variation>
    <location>
        <begin position="112"/>
        <end position="135"/>
    </location>
</feature>
<feature type="sequence variant" id="VAR_031613" description="In dbSNP:rs1555498." evidence="7 9 12 14 15">
    <original>V</original>
    <variation>I</variation>
    <location>
        <position position="259"/>
    </location>
</feature>
<feature type="sequence variant" id="VAR_031614" description="In dbSNP:rs1342642." evidence="14">
    <original>L</original>
    <variation>F</variation>
    <location>
        <position position="382"/>
    </location>
</feature>
<feature type="sequence conflict" description="In Ref. 3; BAG59627." evidence="18" ref="3">
    <original>D</original>
    <variation>V</variation>
    <location>
        <position position="96"/>
    </location>
</feature>
<feature type="strand" evidence="19">
    <location>
        <begin position="41"/>
        <end position="48"/>
    </location>
</feature>
<feature type="strand" evidence="19">
    <location>
        <begin position="51"/>
        <end position="57"/>
    </location>
</feature>
<feature type="strand" evidence="19">
    <location>
        <begin position="68"/>
        <end position="75"/>
    </location>
</feature>
<feature type="helix" evidence="19">
    <location>
        <begin position="85"/>
        <end position="87"/>
    </location>
</feature>
<feature type="strand" evidence="19">
    <location>
        <begin position="88"/>
        <end position="96"/>
    </location>
</feature>
<feature type="turn" evidence="19">
    <location>
        <begin position="98"/>
        <end position="101"/>
    </location>
</feature>
<feature type="strand" evidence="19">
    <location>
        <begin position="108"/>
        <end position="118"/>
    </location>
</feature>
<feature type="helix" evidence="19">
    <location>
        <begin position="131"/>
        <end position="134"/>
    </location>
</feature>
<feature type="strand" evidence="19">
    <location>
        <begin position="141"/>
        <end position="145"/>
    </location>
</feature>
<feature type="strand" evidence="19">
    <location>
        <begin position="151"/>
        <end position="156"/>
    </location>
</feature>
<feature type="helix" evidence="19">
    <location>
        <begin position="172"/>
        <end position="175"/>
    </location>
</feature>
<feature type="strand" evidence="19">
    <location>
        <begin position="180"/>
        <end position="187"/>
    </location>
</feature>
<feature type="turn" evidence="19">
    <location>
        <begin position="188"/>
        <end position="191"/>
    </location>
</feature>
<feature type="strand" evidence="19">
    <location>
        <begin position="192"/>
        <end position="198"/>
    </location>
</feature>
<feature type="strand" evidence="19">
    <location>
        <begin position="200"/>
        <end position="205"/>
    </location>
</feature>
<feature type="strand" evidence="19">
    <location>
        <begin position="213"/>
        <end position="221"/>
    </location>
</feature>
<feature type="strand" evidence="19">
    <location>
        <begin position="223"/>
        <end position="225"/>
    </location>
</feature>
<feature type="strand" evidence="19">
    <location>
        <begin position="233"/>
        <end position="238"/>
    </location>
</feature>
<dbReference type="EMBL" id="AF184971">
    <property type="protein sequence ID" value="AAF01320.1"/>
    <property type="molecule type" value="mRNA"/>
</dbReference>
<dbReference type="EMBL" id="AY358883">
    <property type="protein sequence ID" value="AAQ89242.1"/>
    <property type="molecule type" value="mRNA"/>
</dbReference>
<dbReference type="EMBL" id="AK297121">
    <property type="protein sequence ID" value="BAG59627.1"/>
    <property type="molecule type" value="mRNA"/>
</dbReference>
<dbReference type="EMBL" id="AL135902">
    <property type="status" value="NOT_ANNOTATED_CDS"/>
    <property type="molecule type" value="Genomic_DNA"/>
</dbReference>
<dbReference type="EMBL" id="CH471051">
    <property type="protein sequence ID" value="EAW47936.1"/>
    <property type="molecule type" value="Genomic_DNA"/>
</dbReference>
<dbReference type="EMBL" id="BC113574">
    <property type="protein sequence ID" value="AAI13575.1"/>
    <property type="molecule type" value="mRNA"/>
</dbReference>
<dbReference type="EMBL" id="BC113602">
    <property type="protein sequence ID" value="AAI13603.1"/>
    <property type="molecule type" value="mRNA"/>
</dbReference>
<dbReference type="CCDS" id="CCDS5181.1">
    <molecule id="Q9UHF4-1"/>
</dbReference>
<dbReference type="CCDS" id="CCDS64535.1">
    <molecule id="Q9UHF4-2"/>
</dbReference>
<dbReference type="CCDS" id="CCDS64536.1">
    <molecule id="Q9UHF4-3"/>
</dbReference>
<dbReference type="RefSeq" id="NP_001265651.2">
    <molecule id="Q9UHF4-3"/>
    <property type="nucleotide sequence ID" value="NM_001278722.2"/>
</dbReference>
<dbReference type="RefSeq" id="NP_001265652.2">
    <molecule id="Q9UHF4-2"/>
    <property type="nucleotide sequence ID" value="NM_001278723.3"/>
</dbReference>
<dbReference type="RefSeq" id="NP_001265653.1">
    <property type="nucleotide sequence ID" value="NM_001278724.1"/>
</dbReference>
<dbReference type="RefSeq" id="NP_055247.3">
    <molecule id="Q9UHF4-1"/>
    <property type="nucleotide sequence ID" value="NM_014432.3"/>
</dbReference>
<dbReference type="RefSeq" id="XP_011534206.1">
    <property type="nucleotide sequence ID" value="XM_011535904.2"/>
</dbReference>
<dbReference type="PDB" id="4DOH">
    <property type="method" value="X-ray"/>
    <property type="resolution" value="2.80 A"/>
    <property type="chains" value="E/R=29-245"/>
</dbReference>
<dbReference type="PDBsum" id="4DOH"/>
<dbReference type="SMR" id="Q9UHF4"/>
<dbReference type="BioGRID" id="119804">
    <property type="interactions" value="33"/>
</dbReference>
<dbReference type="ComplexPortal" id="CPX-10221">
    <property type="entry name" value="Interleukin-19 receptor-ligand complex"/>
</dbReference>
<dbReference type="ComplexPortal" id="CPX-10241">
    <property type="entry name" value="Interleukin-20 receptor-ligand Type 1 complex"/>
</dbReference>
<dbReference type="ComplexPortal" id="CPX-10310">
    <property type="entry name" value="Interleukin-24 receptor-ligand complex, type 1"/>
</dbReference>
<dbReference type="ComplexPortal" id="CPX-10316">
    <property type="entry name" value="Interleukin-26 receptor-ligand complex"/>
</dbReference>
<dbReference type="CORUM" id="Q9UHF4"/>
<dbReference type="FunCoup" id="Q9UHF4">
    <property type="interactions" value="980"/>
</dbReference>
<dbReference type="IntAct" id="Q9UHF4">
    <property type="interactions" value="37"/>
</dbReference>
<dbReference type="STRING" id="9606.ENSP00000314976"/>
<dbReference type="GlyCosmos" id="Q9UHF4">
    <property type="glycosylation" value="6 sites, No reported glycans"/>
</dbReference>
<dbReference type="GlyGen" id="Q9UHF4">
    <property type="glycosylation" value="6 sites"/>
</dbReference>
<dbReference type="BioMuta" id="IL20RA"/>
<dbReference type="DMDM" id="145559483"/>
<dbReference type="PaxDb" id="9606-ENSP00000314976"/>
<dbReference type="PeptideAtlas" id="Q9UHF4"/>
<dbReference type="Antibodypedia" id="33022">
    <property type="antibodies" value="394 antibodies from 31 providers"/>
</dbReference>
<dbReference type="DNASU" id="53832"/>
<dbReference type="Ensembl" id="ENST00000316649.10">
    <molecule id="Q9UHF4-1"/>
    <property type="protein sequence ID" value="ENSP00000314976.5"/>
    <property type="gene ID" value="ENSG00000016402.14"/>
</dbReference>
<dbReference type="Ensembl" id="ENST00000367748.4">
    <molecule id="Q9UHF4-2"/>
    <property type="protein sequence ID" value="ENSP00000356722.1"/>
    <property type="gene ID" value="ENSG00000016402.14"/>
</dbReference>
<dbReference type="Ensembl" id="ENST00000541547.5">
    <molecule id="Q9UHF4-3"/>
    <property type="protein sequence ID" value="ENSP00000437843.1"/>
    <property type="gene ID" value="ENSG00000016402.14"/>
</dbReference>
<dbReference type="GeneID" id="53832"/>
<dbReference type="KEGG" id="hsa:53832"/>
<dbReference type="MANE-Select" id="ENST00000316649.10">
    <property type="protein sequence ID" value="ENSP00000314976.5"/>
    <property type="RefSeq nucleotide sequence ID" value="NM_014432.4"/>
    <property type="RefSeq protein sequence ID" value="NP_055247.4"/>
</dbReference>
<dbReference type="UCSC" id="uc003qhj.5">
    <molecule id="Q9UHF4-1"/>
    <property type="organism name" value="human"/>
</dbReference>
<dbReference type="AGR" id="HGNC:6003"/>
<dbReference type="CTD" id="53832"/>
<dbReference type="DisGeNET" id="53832"/>
<dbReference type="GeneCards" id="IL20RA"/>
<dbReference type="HGNC" id="HGNC:6003">
    <property type="gene designation" value="IL20RA"/>
</dbReference>
<dbReference type="HPA" id="ENSG00000016402">
    <property type="expression patterns" value="Tissue enhanced (skin)"/>
</dbReference>
<dbReference type="MIM" id="605620">
    <property type="type" value="gene"/>
</dbReference>
<dbReference type="neXtProt" id="NX_Q9UHF4"/>
<dbReference type="OpenTargets" id="ENSG00000016402"/>
<dbReference type="PharmGKB" id="PA29818"/>
<dbReference type="VEuPathDB" id="HostDB:ENSG00000016402"/>
<dbReference type="eggNOG" id="ENOG502RPFC">
    <property type="taxonomic scope" value="Eukaryota"/>
</dbReference>
<dbReference type="GeneTree" id="ENSGT00940000157314"/>
<dbReference type="HOGENOM" id="CLU_527430_0_0_1"/>
<dbReference type="InParanoid" id="Q9UHF4"/>
<dbReference type="OMA" id="NCSKWTE"/>
<dbReference type="OrthoDB" id="9909056at2759"/>
<dbReference type="PAN-GO" id="Q9UHF4">
    <property type="GO annotations" value="4 GO annotations based on evolutionary models"/>
</dbReference>
<dbReference type="PhylomeDB" id="Q9UHF4"/>
<dbReference type="TreeFam" id="TF334107"/>
<dbReference type="PathwayCommons" id="Q9UHF4"/>
<dbReference type="Reactome" id="R-HSA-8854691">
    <property type="pathway name" value="Interleukin-20 family signaling"/>
</dbReference>
<dbReference type="SignaLink" id="Q9UHF4"/>
<dbReference type="SIGNOR" id="Q9UHF4"/>
<dbReference type="BioGRID-ORCS" id="53832">
    <property type="hits" value="8 hits in 1146 CRISPR screens"/>
</dbReference>
<dbReference type="ChiTaRS" id="IL20RA">
    <property type="organism name" value="human"/>
</dbReference>
<dbReference type="EvolutionaryTrace" id="Q9UHF4"/>
<dbReference type="GeneWiki" id="Interleukin_20_receptor,_alpha_subunit"/>
<dbReference type="GenomeRNAi" id="53832"/>
<dbReference type="Pharos" id="Q9UHF4">
    <property type="development level" value="Tbio"/>
</dbReference>
<dbReference type="PRO" id="PR:Q9UHF4"/>
<dbReference type="Proteomes" id="UP000005640">
    <property type="component" value="Chromosome 6"/>
</dbReference>
<dbReference type="RNAct" id="Q9UHF4">
    <property type="molecule type" value="protein"/>
</dbReference>
<dbReference type="Bgee" id="ENSG00000016402">
    <property type="expression patterns" value="Expressed in olfactory segment of nasal mucosa and 133 other cell types or tissues"/>
</dbReference>
<dbReference type="ExpressionAtlas" id="Q9UHF4">
    <property type="expression patterns" value="baseline and differential"/>
</dbReference>
<dbReference type="GO" id="GO:0005886">
    <property type="term" value="C:plasma membrane"/>
    <property type="evidence" value="ECO:0000318"/>
    <property type="project" value="GO_Central"/>
</dbReference>
<dbReference type="GO" id="GO:0004896">
    <property type="term" value="F:cytokine receptor activity"/>
    <property type="evidence" value="ECO:0000318"/>
    <property type="project" value="GO_Central"/>
</dbReference>
<dbReference type="GO" id="GO:0042015">
    <property type="term" value="F:interleukin-20 binding"/>
    <property type="evidence" value="ECO:0000318"/>
    <property type="project" value="GO_Central"/>
</dbReference>
<dbReference type="GO" id="GO:0019221">
    <property type="term" value="P:cytokine-mediated signaling pathway"/>
    <property type="evidence" value="ECO:0000318"/>
    <property type="project" value="GO_Central"/>
</dbReference>
<dbReference type="GO" id="GO:2001244">
    <property type="term" value="P:positive regulation of intrinsic apoptotic signaling pathway"/>
    <property type="evidence" value="ECO:0007669"/>
    <property type="project" value="Ensembl"/>
</dbReference>
<dbReference type="GO" id="GO:0045124">
    <property type="term" value="P:regulation of bone resorption"/>
    <property type="evidence" value="ECO:0007669"/>
    <property type="project" value="Ensembl"/>
</dbReference>
<dbReference type="CDD" id="cd00063">
    <property type="entry name" value="FN3"/>
    <property type="match status" value="1"/>
</dbReference>
<dbReference type="FunFam" id="2.60.40.10:FF:000348">
    <property type="entry name" value="Interleukin 20 receptor subunit alpha"/>
    <property type="match status" value="1"/>
</dbReference>
<dbReference type="FunFam" id="2.60.40.10:FF:000926">
    <property type="entry name" value="Interleukin 20 receptor subunit alpha"/>
    <property type="match status" value="1"/>
</dbReference>
<dbReference type="Gene3D" id="2.60.40.10">
    <property type="entry name" value="Immunoglobulins"/>
    <property type="match status" value="2"/>
</dbReference>
<dbReference type="InterPro" id="IPR003961">
    <property type="entry name" value="FN3_dom"/>
</dbReference>
<dbReference type="InterPro" id="IPR036116">
    <property type="entry name" value="FN3_sf"/>
</dbReference>
<dbReference type="InterPro" id="IPR013783">
    <property type="entry name" value="Ig-like_fold"/>
</dbReference>
<dbReference type="InterPro" id="IPR015373">
    <property type="entry name" value="Interferon/interleukin_rcp_dom"/>
</dbReference>
<dbReference type="InterPro" id="IPR050650">
    <property type="entry name" value="Type-II_Cytokine-TF_Rcpt"/>
</dbReference>
<dbReference type="PANTHER" id="PTHR20859">
    <property type="entry name" value="INTERFERON/INTERLEUKIN RECEPTOR"/>
    <property type="match status" value="1"/>
</dbReference>
<dbReference type="PANTHER" id="PTHR20859:SF86">
    <property type="entry name" value="INTERLEUKIN-20 RECEPTOR SUBUNIT ALPHA"/>
    <property type="match status" value="1"/>
</dbReference>
<dbReference type="Pfam" id="PF09294">
    <property type="entry name" value="Interfer-bind"/>
    <property type="match status" value="1"/>
</dbReference>
<dbReference type="Pfam" id="PF01108">
    <property type="entry name" value="Tissue_fac"/>
    <property type="match status" value="1"/>
</dbReference>
<dbReference type="SUPFAM" id="SSF49265">
    <property type="entry name" value="Fibronectin type III"/>
    <property type="match status" value="2"/>
</dbReference>
<dbReference type="PROSITE" id="PS50853">
    <property type="entry name" value="FN3"/>
    <property type="match status" value="2"/>
</dbReference>
<accession>Q9UHF4</accession>
<accession>B4DLR5</accession>
<accession>F5H675</accession>
<accession>Q14CW2</accession>
<accession>Q6UWA9</accession>
<accession>Q96SH8</accession>
<keyword id="KW-0002">3D-structure</keyword>
<keyword id="KW-0025">Alternative splicing</keyword>
<keyword id="KW-0903">Direct protein sequencing</keyword>
<keyword id="KW-1015">Disulfide bond</keyword>
<keyword id="KW-0325">Glycoprotein</keyword>
<keyword id="KW-0472">Membrane</keyword>
<keyword id="KW-1267">Proteomics identification</keyword>
<keyword id="KW-0675">Receptor</keyword>
<keyword id="KW-1185">Reference proteome</keyword>
<keyword id="KW-0677">Repeat</keyword>
<keyword id="KW-0732">Signal</keyword>
<keyword id="KW-0812">Transmembrane</keyword>
<keyword id="KW-1133">Transmembrane helix</keyword>
<comment type="function">
    <text>The IL20RA/IL20RB dimer is a receptor for IL19, IL20 and IL24. The IL20RA/IL10RB dimer is a receptor for IL26.</text>
</comment>
<comment type="subunit">
    <text evidence="5 6 8 10 13">Heterodimer with IL20RB and heterodimer with IL10RB.</text>
</comment>
<comment type="interaction">
    <interactant intactId="EBI-2933034">
        <id>Q9UHF4</id>
    </interactant>
    <interactant intactId="EBI-14022785">
        <id>PRO_0000015381</id>
        <label>IL20</label>
        <dbReference type="UniProtKB" id="Q9NYY1"/>
    </interactant>
    <organismsDiffer>false</organismsDiffer>
    <experiments>4</experiments>
</comment>
<comment type="subcellular location">
    <subcellularLocation>
        <location evidence="1">Membrane</location>
        <topology evidence="1">Single-pass type I membrane protein</topology>
    </subcellularLocation>
</comment>
<comment type="alternative products">
    <event type="alternative splicing"/>
    <isoform>
        <id>Q9UHF4-1</id>
        <name>1</name>
        <sequence type="displayed"/>
    </isoform>
    <isoform>
        <id>Q9UHF4-2</id>
        <name>2</name>
        <sequence type="described" ref="VSP_011497 VSP_011498"/>
    </isoform>
    <isoform>
        <id>Q9UHF4-3</id>
        <name>3</name>
        <sequence type="described" ref="VSP_054741"/>
    </isoform>
</comment>
<comment type="tissue specificity">
    <text evidence="5 10">Widely expressed with highest levels in skin and testis and high levels in brain. Highly expressed in psoriatic skin.</text>
</comment>
<comment type="similarity">
    <text evidence="18">Belongs to the type II cytokine receptor family.</text>
</comment>
<gene>
    <name type="primary">IL20RA</name>
    <name type="ORF">UNQ681/PRO1315</name>
</gene>